<protein>
    <recommendedName>
        <fullName evidence="1">5-methyltetrahydropteroyltriglutamate--homocysteine methyltransferase</fullName>
        <ecNumber evidence="1">2.1.1.14</ecNumber>
    </recommendedName>
    <alternativeName>
        <fullName evidence="1">Cobalamin-independent methionine synthase</fullName>
    </alternativeName>
    <alternativeName>
        <fullName evidence="1">Methionine synthase, vitamin-B12 independent isozyme</fullName>
    </alternativeName>
</protein>
<gene>
    <name evidence="1" type="primary">metE</name>
    <name type="ordered locus">VFMJ11_1849</name>
</gene>
<proteinExistence type="inferred from homology"/>
<dbReference type="EC" id="2.1.1.14" evidence="1"/>
<dbReference type="EMBL" id="CP001139">
    <property type="protein sequence ID" value="ACH66129.1"/>
    <property type="molecule type" value="Genomic_DNA"/>
</dbReference>
<dbReference type="RefSeq" id="WP_012533515.1">
    <property type="nucleotide sequence ID" value="NC_011184.1"/>
</dbReference>
<dbReference type="SMR" id="B5FFR4"/>
<dbReference type="KEGG" id="vfm:VFMJ11_1849"/>
<dbReference type="HOGENOM" id="CLU_013175_0_0_6"/>
<dbReference type="UniPathway" id="UPA00051">
    <property type="reaction ID" value="UER00082"/>
</dbReference>
<dbReference type="Proteomes" id="UP000001857">
    <property type="component" value="Chromosome I"/>
</dbReference>
<dbReference type="GO" id="GO:0003871">
    <property type="term" value="F:5-methyltetrahydropteroyltriglutamate-homocysteine S-methyltransferase activity"/>
    <property type="evidence" value="ECO:0007669"/>
    <property type="project" value="UniProtKB-UniRule"/>
</dbReference>
<dbReference type="GO" id="GO:0008270">
    <property type="term" value="F:zinc ion binding"/>
    <property type="evidence" value="ECO:0007669"/>
    <property type="project" value="InterPro"/>
</dbReference>
<dbReference type="GO" id="GO:0009086">
    <property type="term" value="P:methionine biosynthetic process"/>
    <property type="evidence" value="ECO:0007669"/>
    <property type="project" value="UniProtKB-UniRule"/>
</dbReference>
<dbReference type="GO" id="GO:0032259">
    <property type="term" value="P:methylation"/>
    <property type="evidence" value="ECO:0007669"/>
    <property type="project" value="UniProtKB-KW"/>
</dbReference>
<dbReference type="CDD" id="cd03311">
    <property type="entry name" value="CIMS_C_terminal_like"/>
    <property type="match status" value="1"/>
</dbReference>
<dbReference type="CDD" id="cd03312">
    <property type="entry name" value="CIMS_N_terminal_like"/>
    <property type="match status" value="1"/>
</dbReference>
<dbReference type="FunFam" id="3.20.20.210:FF:000002">
    <property type="entry name" value="5-methyltetrahydropteroyltriglutamate--homocysteine methyltransferase"/>
    <property type="match status" value="1"/>
</dbReference>
<dbReference type="FunFam" id="3.20.20.210:FF:000003">
    <property type="entry name" value="5-methyltetrahydropteroyltriglutamate--homocysteine methyltransferase"/>
    <property type="match status" value="1"/>
</dbReference>
<dbReference type="Gene3D" id="3.20.20.210">
    <property type="match status" value="2"/>
</dbReference>
<dbReference type="HAMAP" id="MF_00172">
    <property type="entry name" value="Meth_synth"/>
    <property type="match status" value="1"/>
</dbReference>
<dbReference type="InterPro" id="IPR013215">
    <property type="entry name" value="Cbl-indep_Met_Synth_N"/>
</dbReference>
<dbReference type="InterPro" id="IPR006276">
    <property type="entry name" value="Cobalamin-indep_Met_synthase"/>
</dbReference>
<dbReference type="InterPro" id="IPR002629">
    <property type="entry name" value="Met_Synth_C/arc"/>
</dbReference>
<dbReference type="InterPro" id="IPR038071">
    <property type="entry name" value="UROD/MetE-like_sf"/>
</dbReference>
<dbReference type="NCBIfam" id="TIGR01371">
    <property type="entry name" value="met_syn_B12ind"/>
    <property type="match status" value="1"/>
</dbReference>
<dbReference type="NCBIfam" id="NF003556">
    <property type="entry name" value="PRK05222.1"/>
    <property type="match status" value="1"/>
</dbReference>
<dbReference type="PANTHER" id="PTHR30519">
    <property type="entry name" value="5-METHYLTETRAHYDROPTEROYLTRIGLUTAMATE--HOMOCYSTEINE METHYLTRANSFERASE"/>
    <property type="match status" value="1"/>
</dbReference>
<dbReference type="Pfam" id="PF08267">
    <property type="entry name" value="Meth_synt_1"/>
    <property type="match status" value="1"/>
</dbReference>
<dbReference type="Pfam" id="PF01717">
    <property type="entry name" value="Meth_synt_2"/>
    <property type="match status" value="1"/>
</dbReference>
<dbReference type="PIRSF" id="PIRSF000382">
    <property type="entry name" value="MeTrfase_B12_ind"/>
    <property type="match status" value="1"/>
</dbReference>
<dbReference type="SUPFAM" id="SSF51726">
    <property type="entry name" value="UROD/MetE-like"/>
    <property type="match status" value="2"/>
</dbReference>
<keyword id="KW-0028">Amino-acid biosynthesis</keyword>
<keyword id="KW-0479">Metal-binding</keyword>
<keyword id="KW-0486">Methionine biosynthesis</keyword>
<keyword id="KW-0489">Methyltransferase</keyword>
<keyword id="KW-0677">Repeat</keyword>
<keyword id="KW-0808">Transferase</keyword>
<keyword id="KW-0862">Zinc</keyword>
<organism>
    <name type="scientific">Aliivibrio fischeri (strain MJ11)</name>
    <name type="common">Vibrio fischeri</name>
    <dbReference type="NCBI Taxonomy" id="388396"/>
    <lineage>
        <taxon>Bacteria</taxon>
        <taxon>Pseudomonadati</taxon>
        <taxon>Pseudomonadota</taxon>
        <taxon>Gammaproteobacteria</taxon>
        <taxon>Vibrionales</taxon>
        <taxon>Vibrionaceae</taxon>
        <taxon>Aliivibrio</taxon>
    </lineage>
</organism>
<sequence>MTTESKTKTVTHILGYPRVGAQRELKFAQEKYWRGEIEQKELLAVGSELRQRHWKDQSASGLDFVTAGDFAWYDHVLTTSLLLGHVPARHNNGFPDLDTLFKVGRGQSQNSCGCGEAASDMTKWFNTNYHYIVPEFSKNDKFNVSWSQLFDEIAEAQKQGHNVKPVLLGPLSYLWLGKEVNDEEVEQGFDRLSLLPRLLTAYQAIFSKLSALGVEWVQIDEPILALELPKAWADSFKLAYQVIQSDVKLLLTTYFDGVEHHLDKITKLAVNGLHIDVSAAPDQLDAIVSALPKEWVLSVGAVNGRNVWRADLERLHERLQPVKEALGDKLWIASSCSLLHSPVDLEQETELSKETLQWFAFAKQKLREVTLLADALDGNQNAILACHQYSQPLRERESAEHINKPAVQQRLAAITPALAERAEAYSVRAQHQAEKLGLPLLPTTTIGSFPQTSDIRQQRSAYRTGKLNEQDYVTAMKGHIADAVERQERLDLDVLVHGEAERNDMVEYFAENLNGFQATRFGWVQSYGSRCVKPAIVVADIEREAPITVSWTQYAQSLTTKQMKGMLTGPVTILGWTFPREDITRKEIAQQLALVLRDEVSDLQQAGINIIQIDEPAIREGLPIKKSDQKAYLDWAVEAFKISAASAKSETQIHTHMCYSEFNEIIESVAALDADVITIETSRSNMELLKAFEDFNYPNEIGPGVYDIHSPNIPSQEWIVDLIETAAARVPVERLWVNPDCGLKTRNWKETEAALENMVKAAKALRKKWQSNAA</sequence>
<comment type="function">
    <text evidence="1">Catalyzes the transfer of a methyl group from 5-methyltetrahydrofolate to homocysteine resulting in methionine formation.</text>
</comment>
<comment type="catalytic activity">
    <reaction evidence="1">
        <text>5-methyltetrahydropteroyltri-L-glutamate + L-homocysteine = tetrahydropteroyltri-L-glutamate + L-methionine</text>
        <dbReference type="Rhea" id="RHEA:21196"/>
        <dbReference type="ChEBI" id="CHEBI:57844"/>
        <dbReference type="ChEBI" id="CHEBI:58140"/>
        <dbReference type="ChEBI" id="CHEBI:58199"/>
        <dbReference type="ChEBI" id="CHEBI:58207"/>
        <dbReference type="EC" id="2.1.1.14"/>
    </reaction>
</comment>
<comment type="cofactor">
    <cofactor evidence="1">
        <name>Zn(2+)</name>
        <dbReference type="ChEBI" id="CHEBI:29105"/>
    </cofactor>
    <text evidence="1">Binds 1 zinc ion per subunit.</text>
</comment>
<comment type="pathway">
    <text evidence="1">Amino-acid biosynthesis; L-methionine biosynthesis via de novo pathway; L-methionine from L-homocysteine (MetE route): step 1/1.</text>
</comment>
<comment type="similarity">
    <text evidence="1">Belongs to the vitamin-B12 independent methionine synthase family.</text>
</comment>
<accession>B5FFR4</accession>
<feature type="chain" id="PRO_1000097851" description="5-methyltetrahydropteroyltriglutamate--homocysteine methyltransferase">
    <location>
        <begin position="1"/>
        <end position="774"/>
    </location>
</feature>
<feature type="active site" description="Proton donor" evidence="1">
    <location>
        <position position="709"/>
    </location>
</feature>
<feature type="binding site" evidence="1">
    <location>
        <begin position="23"/>
        <end position="26"/>
    </location>
    <ligand>
        <name>5-methyltetrahydropteroyltri-L-glutamate</name>
        <dbReference type="ChEBI" id="CHEBI:58207"/>
    </ligand>
</feature>
<feature type="binding site" evidence="1">
    <location>
        <position position="123"/>
    </location>
    <ligand>
        <name>5-methyltetrahydropteroyltri-L-glutamate</name>
        <dbReference type="ChEBI" id="CHEBI:58207"/>
    </ligand>
</feature>
<feature type="binding site" evidence="1">
    <location>
        <begin position="446"/>
        <end position="448"/>
    </location>
    <ligand>
        <name>L-homocysteine</name>
        <dbReference type="ChEBI" id="CHEBI:58199"/>
    </ligand>
</feature>
<feature type="binding site" evidence="1">
    <location>
        <begin position="446"/>
        <end position="448"/>
    </location>
    <ligand>
        <name>L-methionine</name>
        <dbReference type="ChEBI" id="CHEBI:57844"/>
    </ligand>
</feature>
<feature type="binding site" evidence="1">
    <location>
        <position position="499"/>
    </location>
    <ligand>
        <name>L-homocysteine</name>
        <dbReference type="ChEBI" id="CHEBI:58199"/>
    </ligand>
</feature>
<feature type="binding site" evidence="1">
    <location>
        <position position="499"/>
    </location>
    <ligand>
        <name>L-methionine</name>
        <dbReference type="ChEBI" id="CHEBI:57844"/>
    </ligand>
</feature>
<feature type="binding site" evidence="1">
    <location>
        <begin position="530"/>
        <end position="531"/>
    </location>
    <ligand>
        <name>5-methyltetrahydropteroyltri-L-glutamate</name>
        <dbReference type="ChEBI" id="CHEBI:58207"/>
    </ligand>
</feature>
<feature type="binding site" evidence="1">
    <location>
        <position position="576"/>
    </location>
    <ligand>
        <name>5-methyltetrahydropteroyltri-L-glutamate</name>
        <dbReference type="ChEBI" id="CHEBI:58207"/>
    </ligand>
</feature>
<feature type="binding site" evidence="1">
    <location>
        <position position="614"/>
    </location>
    <ligand>
        <name>L-homocysteine</name>
        <dbReference type="ChEBI" id="CHEBI:58199"/>
    </ligand>
</feature>
<feature type="binding site" evidence="1">
    <location>
        <position position="614"/>
    </location>
    <ligand>
        <name>L-methionine</name>
        <dbReference type="ChEBI" id="CHEBI:57844"/>
    </ligand>
</feature>
<feature type="binding site" evidence="1">
    <location>
        <position position="620"/>
    </location>
    <ligand>
        <name>5-methyltetrahydropteroyltri-L-glutamate</name>
        <dbReference type="ChEBI" id="CHEBI:58207"/>
    </ligand>
</feature>
<feature type="binding site" evidence="1">
    <location>
        <position position="656"/>
    </location>
    <ligand>
        <name>Zn(2+)</name>
        <dbReference type="ChEBI" id="CHEBI:29105"/>
        <note>catalytic</note>
    </ligand>
</feature>
<feature type="binding site" evidence="1">
    <location>
        <position position="658"/>
    </location>
    <ligand>
        <name>Zn(2+)</name>
        <dbReference type="ChEBI" id="CHEBI:29105"/>
        <note>catalytic</note>
    </ligand>
</feature>
<feature type="binding site" evidence="1">
    <location>
        <position position="680"/>
    </location>
    <ligand>
        <name>Zn(2+)</name>
        <dbReference type="ChEBI" id="CHEBI:29105"/>
        <note>catalytic</note>
    </ligand>
</feature>
<feature type="binding site" evidence="1">
    <location>
        <position position="741"/>
    </location>
    <ligand>
        <name>Zn(2+)</name>
        <dbReference type="ChEBI" id="CHEBI:29105"/>
        <note>catalytic</note>
    </ligand>
</feature>
<name>METE_ALIFM</name>
<reference key="1">
    <citation type="submission" date="2008-08" db="EMBL/GenBank/DDBJ databases">
        <title>Complete sequence of Vibrio fischeri strain MJ11.</title>
        <authorList>
            <person name="Mandel M.J."/>
            <person name="Stabb E.V."/>
            <person name="Ruby E.G."/>
            <person name="Ferriera S."/>
            <person name="Johnson J."/>
            <person name="Kravitz S."/>
            <person name="Beeson K."/>
            <person name="Sutton G."/>
            <person name="Rogers Y.-H."/>
            <person name="Friedman R."/>
            <person name="Frazier M."/>
            <person name="Venter J.C."/>
        </authorList>
    </citation>
    <scope>NUCLEOTIDE SEQUENCE [LARGE SCALE GENOMIC DNA]</scope>
    <source>
        <strain>MJ11</strain>
    </source>
</reference>
<evidence type="ECO:0000255" key="1">
    <source>
        <dbReference type="HAMAP-Rule" id="MF_00172"/>
    </source>
</evidence>